<sequence>MKTGIVTTLIALCLPVSVFATTLRLSTDVDLLVLDGKKVSSSLLRGADSIELDNGPHQLVFRVEKTIHLSNSEERLYISPPLVVSFNTQLINQVNFRLPRLENEREANHFDAAPRLELLDGDATPIPVKLDILAITSTAKTIDYEVEVERYNKSAKRASLPQFATMMADDSTLLSGVSELDAIPPQSQVLTEQRLKYWFKLADPQTRNTFLQWAEKQPSS</sequence>
<feature type="signal peptide" evidence="1">
    <location>
        <begin position="1"/>
        <end position="20"/>
    </location>
</feature>
<feature type="chain" id="PRO_1000200484" description="UPF0319 protein YccT">
    <location>
        <begin position="21"/>
        <end position="220"/>
    </location>
</feature>
<reference key="1">
    <citation type="journal article" date="2008" name="DNA Res.">
        <title>Complete genome sequence and comparative analysis of the wild-type commensal Escherichia coli strain SE11 isolated from a healthy adult.</title>
        <authorList>
            <person name="Oshima K."/>
            <person name="Toh H."/>
            <person name="Ogura Y."/>
            <person name="Sasamoto H."/>
            <person name="Morita H."/>
            <person name="Park S.-H."/>
            <person name="Ooka T."/>
            <person name="Iyoda S."/>
            <person name="Taylor T.D."/>
            <person name="Hayashi T."/>
            <person name="Itoh K."/>
            <person name="Hattori M."/>
        </authorList>
    </citation>
    <scope>NUCLEOTIDE SEQUENCE [LARGE SCALE GENOMIC DNA]</scope>
    <source>
        <strain>SE11</strain>
    </source>
</reference>
<accession>B6I939</accession>
<protein>
    <recommendedName>
        <fullName evidence="1">UPF0319 protein YccT</fullName>
    </recommendedName>
</protein>
<gene>
    <name evidence="1" type="primary">yccT</name>
    <name type="ordered locus">ECSE_1026</name>
</gene>
<keyword id="KW-0732">Signal</keyword>
<dbReference type="EMBL" id="AP009240">
    <property type="protein sequence ID" value="BAG76550.1"/>
    <property type="molecule type" value="Genomic_DNA"/>
</dbReference>
<dbReference type="RefSeq" id="WP_000847791.1">
    <property type="nucleotide sequence ID" value="NC_011415.1"/>
</dbReference>
<dbReference type="KEGG" id="ecy:ECSE_1026"/>
<dbReference type="HOGENOM" id="CLU_073782_2_0_6"/>
<dbReference type="Proteomes" id="UP000008199">
    <property type="component" value="Chromosome"/>
</dbReference>
<dbReference type="HAMAP" id="MF_00789">
    <property type="entry name" value="UPF0319"/>
    <property type="match status" value="1"/>
</dbReference>
<dbReference type="InterPro" id="IPR018635">
    <property type="entry name" value="UPF0319"/>
</dbReference>
<dbReference type="NCBIfam" id="NF047712">
    <property type="entry name" value="CrliSynInhib"/>
    <property type="match status" value="1"/>
</dbReference>
<dbReference type="NCBIfam" id="NF002967">
    <property type="entry name" value="PRK03641.1"/>
    <property type="match status" value="1"/>
</dbReference>
<dbReference type="PANTHER" id="PTHR38108">
    <property type="entry name" value="UPF0319 PROTEIN YCCT"/>
    <property type="match status" value="1"/>
</dbReference>
<dbReference type="PANTHER" id="PTHR38108:SF1">
    <property type="entry name" value="UPF0319 PROTEIN YCCT"/>
    <property type="match status" value="1"/>
</dbReference>
<dbReference type="Pfam" id="PF09829">
    <property type="entry name" value="DUF2057"/>
    <property type="match status" value="1"/>
</dbReference>
<evidence type="ECO:0000255" key="1">
    <source>
        <dbReference type="HAMAP-Rule" id="MF_00789"/>
    </source>
</evidence>
<comment type="similarity">
    <text evidence="1">Belongs to the UPF0319 family.</text>
</comment>
<proteinExistence type="inferred from homology"/>
<name>YCCT_ECOSE</name>
<organism>
    <name type="scientific">Escherichia coli (strain SE11)</name>
    <dbReference type="NCBI Taxonomy" id="409438"/>
    <lineage>
        <taxon>Bacteria</taxon>
        <taxon>Pseudomonadati</taxon>
        <taxon>Pseudomonadota</taxon>
        <taxon>Gammaproteobacteria</taxon>
        <taxon>Enterobacterales</taxon>
        <taxon>Enterobacteriaceae</taxon>
        <taxon>Escherichia</taxon>
    </lineage>
</organism>